<proteinExistence type="inferred from homology"/>
<keyword id="KW-0464">Manganese</keyword>
<keyword id="KW-0479">Metal-binding</keyword>
<keyword id="KW-0560">Oxidoreductase</keyword>
<evidence type="ECO:0000250" key="1"/>
<evidence type="ECO:0000305" key="2"/>
<feature type="initiator methionine" description="Removed" evidence="1">
    <location>
        <position position="1"/>
    </location>
</feature>
<feature type="chain" id="PRO_0000160107" description="Superoxide dismutase [Mn]">
    <location>
        <begin position="2"/>
        <end position="204"/>
    </location>
</feature>
<feature type="binding site" evidence="1">
    <location>
        <position position="29"/>
    </location>
    <ligand>
        <name>Mn(2+)</name>
        <dbReference type="ChEBI" id="CHEBI:29035"/>
    </ligand>
</feature>
<feature type="binding site" evidence="1">
    <location>
        <position position="84"/>
    </location>
    <ligand>
        <name>Mn(2+)</name>
        <dbReference type="ChEBI" id="CHEBI:29035"/>
    </ligand>
</feature>
<feature type="binding site" evidence="1">
    <location>
        <position position="167"/>
    </location>
    <ligand>
        <name>Mn(2+)</name>
        <dbReference type="ChEBI" id="CHEBI:29035"/>
    </ligand>
</feature>
<feature type="binding site" evidence="1">
    <location>
        <position position="171"/>
    </location>
    <ligand>
        <name>Mn(2+)</name>
        <dbReference type="ChEBI" id="CHEBI:29035"/>
    </ligand>
</feature>
<organism>
    <name type="scientific">Thermus thermophilus (strain ATCC BAA-163 / DSM 7039 / HB27)</name>
    <dbReference type="NCBI Taxonomy" id="262724"/>
    <lineage>
        <taxon>Bacteria</taxon>
        <taxon>Thermotogati</taxon>
        <taxon>Deinococcota</taxon>
        <taxon>Deinococci</taxon>
        <taxon>Thermales</taxon>
        <taxon>Thermaceae</taxon>
        <taxon>Thermus</taxon>
    </lineage>
</organism>
<dbReference type="EC" id="1.15.1.1"/>
<dbReference type="EMBL" id="AB010884">
    <property type="protein sequence ID" value="BAA25701.1"/>
    <property type="molecule type" value="Genomic_DNA"/>
</dbReference>
<dbReference type="EMBL" id="AE017221">
    <property type="protein sequence ID" value="AAS80537.1"/>
    <property type="molecule type" value="Genomic_DNA"/>
</dbReference>
<dbReference type="PIR" id="T43728">
    <property type="entry name" value="T43728"/>
</dbReference>
<dbReference type="RefSeq" id="WP_011172643.1">
    <property type="nucleotide sequence ID" value="NC_005835.1"/>
</dbReference>
<dbReference type="SMR" id="P61502"/>
<dbReference type="GeneID" id="3169327"/>
<dbReference type="KEGG" id="tth:TT_C0189"/>
<dbReference type="eggNOG" id="COG0605">
    <property type="taxonomic scope" value="Bacteria"/>
</dbReference>
<dbReference type="HOGENOM" id="CLU_031625_0_1_0"/>
<dbReference type="OrthoDB" id="9803125at2"/>
<dbReference type="BRENDA" id="1.15.1.1">
    <property type="organism ID" value="2305"/>
</dbReference>
<dbReference type="Proteomes" id="UP000000592">
    <property type="component" value="Chromosome"/>
</dbReference>
<dbReference type="GO" id="GO:0005737">
    <property type="term" value="C:cytoplasm"/>
    <property type="evidence" value="ECO:0007669"/>
    <property type="project" value="TreeGrafter"/>
</dbReference>
<dbReference type="GO" id="GO:0046872">
    <property type="term" value="F:metal ion binding"/>
    <property type="evidence" value="ECO:0007669"/>
    <property type="project" value="UniProtKB-KW"/>
</dbReference>
<dbReference type="GO" id="GO:0004784">
    <property type="term" value="F:superoxide dismutase activity"/>
    <property type="evidence" value="ECO:0007669"/>
    <property type="project" value="UniProtKB-EC"/>
</dbReference>
<dbReference type="GO" id="GO:0071793">
    <property type="term" value="P:bacillithiol biosynthetic process"/>
    <property type="evidence" value="ECO:0000269"/>
    <property type="project" value="CACAO"/>
</dbReference>
<dbReference type="FunFam" id="1.10.287.990:FF:000001">
    <property type="entry name" value="Superoxide dismutase"/>
    <property type="match status" value="1"/>
</dbReference>
<dbReference type="FunFam" id="3.55.40.20:FF:000001">
    <property type="entry name" value="Superoxide dismutase"/>
    <property type="match status" value="1"/>
</dbReference>
<dbReference type="Gene3D" id="1.10.287.990">
    <property type="entry name" value="Fe,Mn superoxide dismutase (SOD) domain"/>
    <property type="match status" value="1"/>
</dbReference>
<dbReference type="Gene3D" id="3.55.40.20">
    <property type="entry name" value="Iron/manganese superoxide dismutase, C-terminal domain"/>
    <property type="match status" value="1"/>
</dbReference>
<dbReference type="InterPro" id="IPR001189">
    <property type="entry name" value="Mn/Fe_SOD"/>
</dbReference>
<dbReference type="InterPro" id="IPR019833">
    <property type="entry name" value="Mn/Fe_SOD_BS"/>
</dbReference>
<dbReference type="InterPro" id="IPR019832">
    <property type="entry name" value="Mn/Fe_SOD_C"/>
</dbReference>
<dbReference type="InterPro" id="IPR019831">
    <property type="entry name" value="Mn/Fe_SOD_N"/>
</dbReference>
<dbReference type="InterPro" id="IPR036324">
    <property type="entry name" value="Mn/Fe_SOD_N_sf"/>
</dbReference>
<dbReference type="InterPro" id="IPR036314">
    <property type="entry name" value="SOD_C_sf"/>
</dbReference>
<dbReference type="PANTHER" id="PTHR43595">
    <property type="entry name" value="37S RIBOSOMAL PROTEIN S26, MITOCHONDRIAL"/>
    <property type="match status" value="1"/>
</dbReference>
<dbReference type="PANTHER" id="PTHR43595:SF2">
    <property type="entry name" value="SMALL RIBOSOMAL SUBUNIT PROTEIN MS42"/>
    <property type="match status" value="1"/>
</dbReference>
<dbReference type="Pfam" id="PF02777">
    <property type="entry name" value="Sod_Fe_C"/>
    <property type="match status" value="1"/>
</dbReference>
<dbReference type="Pfam" id="PF00081">
    <property type="entry name" value="Sod_Fe_N"/>
    <property type="match status" value="1"/>
</dbReference>
<dbReference type="PIRSF" id="PIRSF000349">
    <property type="entry name" value="SODismutase"/>
    <property type="match status" value="1"/>
</dbReference>
<dbReference type="PRINTS" id="PR01703">
    <property type="entry name" value="MNSODISMTASE"/>
</dbReference>
<dbReference type="SUPFAM" id="SSF54719">
    <property type="entry name" value="Fe,Mn superoxide dismutase (SOD), C-terminal domain"/>
    <property type="match status" value="1"/>
</dbReference>
<dbReference type="SUPFAM" id="SSF46609">
    <property type="entry name" value="Fe,Mn superoxide dismutase (SOD), N-terminal domain"/>
    <property type="match status" value="1"/>
</dbReference>
<dbReference type="PROSITE" id="PS00088">
    <property type="entry name" value="SOD_MN"/>
    <property type="match status" value="1"/>
</dbReference>
<comment type="function">
    <text evidence="1">Destroys superoxide anion radicals which are normally produced within the cells and which are toxic to biological systems.</text>
</comment>
<comment type="catalytic activity">
    <reaction>
        <text>2 superoxide + 2 H(+) = H2O2 + O2</text>
        <dbReference type="Rhea" id="RHEA:20696"/>
        <dbReference type="ChEBI" id="CHEBI:15378"/>
        <dbReference type="ChEBI" id="CHEBI:15379"/>
        <dbReference type="ChEBI" id="CHEBI:16240"/>
        <dbReference type="ChEBI" id="CHEBI:18421"/>
        <dbReference type="EC" id="1.15.1.1"/>
    </reaction>
</comment>
<comment type="cofactor">
    <cofactor evidence="1">
        <name>Mn(2+)</name>
        <dbReference type="ChEBI" id="CHEBI:29035"/>
    </cofactor>
    <text evidence="1">Binds 1 Mn(2+) ion per subunit.</text>
</comment>
<comment type="subunit">
    <text evidence="1">Homotetramer.</text>
</comment>
<comment type="similarity">
    <text evidence="2">Belongs to the iron/manganese superoxide dismutase family.</text>
</comment>
<accession>P61502</accession>
<accession>P09214</accession>
<protein>
    <recommendedName>
        <fullName>Superoxide dismutase [Mn]</fullName>
        <ecNumber>1.15.1.1</ecNumber>
    </recommendedName>
</protein>
<sequence length="204" mass="23230">MPYPFKLPDLGYPYEALEPHIDAKTMEIHHQKHHGAYVTNLNAALEKYPYLHGVEVEVLLRHLAALPQDIQTAVRNNGGGHLNHSLFWRLLTPGGAKEPVGELKKAIDEQFGGFQALKEKLTQAAMGRFGSGWAWLVKDPFGKLHVLSTPNQDNPVMEGFTPIVGIDVWEHAYYLKYQNRRADYLQAIWNVLNWDVAEEFFKKA</sequence>
<name>SODM_THET2</name>
<gene>
    <name type="primary">sodA</name>
    <name type="ordered locus">TT_C0189</name>
</gene>
<reference key="1">
    <citation type="submission" date="1998-02" db="EMBL/GenBank/DDBJ databases">
        <title>Molecular cloning and sequence analysis of the fumC and sodA genes from an extremely thermophilic eubacterium Thermus thermophilus.</title>
        <authorList>
            <person name="Kosuge T."/>
            <person name="Umehara K."/>
            <person name="Matsuura S."/>
            <person name="Hoshino T."/>
        </authorList>
    </citation>
    <scope>NUCLEOTIDE SEQUENCE [GENOMIC DNA]</scope>
</reference>
<reference key="2">
    <citation type="journal article" date="2004" name="Nat. Biotechnol.">
        <title>The genome sequence of the extreme thermophile Thermus thermophilus.</title>
        <authorList>
            <person name="Henne A."/>
            <person name="Brueggemann H."/>
            <person name="Raasch C."/>
            <person name="Wiezer A."/>
            <person name="Hartsch T."/>
            <person name="Liesegang H."/>
            <person name="Johann A."/>
            <person name="Lienard T."/>
            <person name="Gohl O."/>
            <person name="Martinez-Arias R."/>
            <person name="Jacobi C."/>
            <person name="Starkuviene V."/>
            <person name="Schlenczeck S."/>
            <person name="Dencker S."/>
            <person name="Huber R."/>
            <person name="Klenk H.-P."/>
            <person name="Kramer W."/>
            <person name="Merkl R."/>
            <person name="Gottschalk G."/>
            <person name="Fritz H.-J."/>
        </authorList>
    </citation>
    <scope>NUCLEOTIDE SEQUENCE [LARGE SCALE GENOMIC DNA]</scope>
    <source>
        <strain>ATCC BAA-163 / DSM 7039 / HB27</strain>
    </source>
</reference>